<gene>
    <name evidence="1" type="primary">rpsG</name>
    <name type="ordered locus">A2cp1_2015</name>
</gene>
<dbReference type="EMBL" id="CP001359">
    <property type="protein sequence ID" value="ACL65356.1"/>
    <property type="molecule type" value="Genomic_DNA"/>
</dbReference>
<dbReference type="RefSeq" id="WP_012525971.1">
    <property type="nucleotide sequence ID" value="NC_011891.1"/>
</dbReference>
<dbReference type="SMR" id="B8J857"/>
<dbReference type="KEGG" id="acp:A2cp1_2015"/>
<dbReference type="HOGENOM" id="CLU_072226_1_1_7"/>
<dbReference type="Proteomes" id="UP000007089">
    <property type="component" value="Chromosome"/>
</dbReference>
<dbReference type="GO" id="GO:0015935">
    <property type="term" value="C:small ribosomal subunit"/>
    <property type="evidence" value="ECO:0007669"/>
    <property type="project" value="InterPro"/>
</dbReference>
<dbReference type="GO" id="GO:0019843">
    <property type="term" value="F:rRNA binding"/>
    <property type="evidence" value="ECO:0007669"/>
    <property type="project" value="UniProtKB-UniRule"/>
</dbReference>
<dbReference type="GO" id="GO:0003735">
    <property type="term" value="F:structural constituent of ribosome"/>
    <property type="evidence" value="ECO:0007669"/>
    <property type="project" value="InterPro"/>
</dbReference>
<dbReference type="GO" id="GO:0000049">
    <property type="term" value="F:tRNA binding"/>
    <property type="evidence" value="ECO:0007669"/>
    <property type="project" value="UniProtKB-UniRule"/>
</dbReference>
<dbReference type="GO" id="GO:0006412">
    <property type="term" value="P:translation"/>
    <property type="evidence" value="ECO:0007669"/>
    <property type="project" value="UniProtKB-UniRule"/>
</dbReference>
<dbReference type="CDD" id="cd14869">
    <property type="entry name" value="uS7_Bacteria"/>
    <property type="match status" value="1"/>
</dbReference>
<dbReference type="FunFam" id="1.10.455.10:FF:000001">
    <property type="entry name" value="30S ribosomal protein S7"/>
    <property type="match status" value="1"/>
</dbReference>
<dbReference type="Gene3D" id="1.10.455.10">
    <property type="entry name" value="Ribosomal protein S7 domain"/>
    <property type="match status" value="1"/>
</dbReference>
<dbReference type="HAMAP" id="MF_00480_B">
    <property type="entry name" value="Ribosomal_uS7_B"/>
    <property type="match status" value="1"/>
</dbReference>
<dbReference type="InterPro" id="IPR000235">
    <property type="entry name" value="Ribosomal_uS7"/>
</dbReference>
<dbReference type="InterPro" id="IPR005717">
    <property type="entry name" value="Ribosomal_uS7_bac/org-type"/>
</dbReference>
<dbReference type="InterPro" id="IPR020606">
    <property type="entry name" value="Ribosomal_uS7_CS"/>
</dbReference>
<dbReference type="InterPro" id="IPR023798">
    <property type="entry name" value="Ribosomal_uS7_dom"/>
</dbReference>
<dbReference type="InterPro" id="IPR036823">
    <property type="entry name" value="Ribosomal_uS7_dom_sf"/>
</dbReference>
<dbReference type="NCBIfam" id="TIGR01029">
    <property type="entry name" value="rpsG_bact"/>
    <property type="match status" value="1"/>
</dbReference>
<dbReference type="PANTHER" id="PTHR11205">
    <property type="entry name" value="RIBOSOMAL PROTEIN S7"/>
    <property type="match status" value="1"/>
</dbReference>
<dbReference type="Pfam" id="PF00177">
    <property type="entry name" value="Ribosomal_S7"/>
    <property type="match status" value="1"/>
</dbReference>
<dbReference type="PIRSF" id="PIRSF002122">
    <property type="entry name" value="RPS7p_RPS7a_RPS5e_RPS7o"/>
    <property type="match status" value="1"/>
</dbReference>
<dbReference type="SUPFAM" id="SSF47973">
    <property type="entry name" value="Ribosomal protein S7"/>
    <property type="match status" value="1"/>
</dbReference>
<dbReference type="PROSITE" id="PS00052">
    <property type="entry name" value="RIBOSOMAL_S7"/>
    <property type="match status" value="1"/>
</dbReference>
<accession>B8J857</accession>
<keyword id="KW-0687">Ribonucleoprotein</keyword>
<keyword id="KW-0689">Ribosomal protein</keyword>
<keyword id="KW-0694">RNA-binding</keyword>
<keyword id="KW-0699">rRNA-binding</keyword>
<keyword id="KW-0820">tRNA-binding</keyword>
<organism>
    <name type="scientific">Anaeromyxobacter dehalogenans (strain 2CP-1 / ATCC BAA-258)</name>
    <dbReference type="NCBI Taxonomy" id="455488"/>
    <lineage>
        <taxon>Bacteria</taxon>
        <taxon>Pseudomonadati</taxon>
        <taxon>Myxococcota</taxon>
        <taxon>Myxococcia</taxon>
        <taxon>Myxococcales</taxon>
        <taxon>Cystobacterineae</taxon>
        <taxon>Anaeromyxobacteraceae</taxon>
        <taxon>Anaeromyxobacter</taxon>
    </lineage>
</organism>
<proteinExistence type="inferred from homology"/>
<name>RS7_ANAD2</name>
<feature type="chain" id="PRO_1000135573" description="Small ribosomal subunit protein uS7">
    <location>
        <begin position="1"/>
        <end position="156"/>
    </location>
</feature>
<reference key="1">
    <citation type="submission" date="2009-01" db="EMBL/GenBank/DDBJ databases">
        <title>Complete sequence of Anaeromyxobacter dehalogenans 2CP-1.</title>
        <authorList>
            <person name="Lucas S."/>
            <person name="Copeland A."/>
            <person name="Lapidus A."/>
            <person name="Glavina del Rio T."/>
            <person name="Dalin E."/>
            <person name="Tice H."/>
            <person name="Bruce D."/>
            <person name="Goodwin L."/>
            <person name="Pitluck S."/>
            <person name="Saunders E."/>
            <person name="Brettin T."/>
            <person name="Detter J.C."/>
            <person name="Han C."/>
            <person name="Larimer F."/>
            <person name="Land M."/>
            <person name="Hauser L."/>
            <person name="Kyrpides N."/>
            <person name="Ovchinnikova G."/>
            <person name="Beliaev A.S."/>
            <person name="Richardson P."/>
        </authorList>
    </citation>
    <scope>NUCLEOTIDE SEQUENCE [LARGE SCALE GENOMIC DNA]</scope>
    <source>
        <strain>2CP-1 / ATCC BAA-258</strain>
    </source>
</reference>
<protein>
    <recommendedName>
        <fullName evidence="1">Small ribosomal subunit protein uS7</fullName>
    </recommendedName>
    <alternativeName>
        <fullName evidence="2">30S ribosomal protein S7</fullName>
    </alternativeName>
</protein>
<comment type="function">
    <text evidence="1">One of the primary rRNA binding proteins, it binds directly to 16S rRNA where it nucleates assembly of the head domain of the 30S subunit. Is located at the subunit interface close to the decoding center, probably blocks exit of the E-site tRNA.</text>
</comment>
<comment type="subunit">
    <text evidence="1">Part of the 30S ribosomal subunit. Contacts proteins S9 and S11.</text>
</comment>
<comment type="similarity">
    <text evidence="1">Belongs to the universal ribosomal protein uS7 family.</text>
</comment>
<sequence length="156" mass="18085">MPRRREVEKRKILPDPKFQDRIVAKFVNNLMRKGKKSTGERIIYGAFDQVEAKLKDDPLKVFKKALDNVKPVVEVKSRRVGGATYQVPVEVRQDRRTALAMRWLIEYSRGRGEKTMVEKLAGEIMDAASNRGNAVKKREDTHKMAEANKAFAHYRW</sequence>
<evidence type="ECO:0000255" key="1">
    <source>
        <dbReference type="HAMAP-Rule" id="MF_00480"/>
    </source>
</evidence>
<evidence type="ECO:0000305" key="2"/>